<name>TSAD_CHLMU</name>
<sequence>MLTLGLESSCDETSCALVENGKILANRIASQDIHAAYGGVIPELASRAHLQIFPKLLAAVAQDAEVSLEDVELISVANTPGLIGALSVGVNFAKGLASGLKKTLIGVNHVEAHLYAACLEEPSIRFPALGLAISGAHTSLFLMPNATTFLLIGKTRDDAIGETFDKVARFLGLPYPGGQKLEELAQDGDEEAYPFSRAKVSGNDFSFSGLKTAVLYALKGNNSSAKAPFPEVSETQKRNIAASFQKAAFMTIAQKLPDIVKAFSCESLIVGGGVANNRYFRRLLNQTCSLPTYFPSSQLCSDNAAMIAGLGERLFCNQTYVSKEVIPCARYQWESACLSH</sequence>
<gene>
    <name evidence="1" type="primary">tsaD</name>
    <name type="synonym">gcp</name>
    <name type="ordered locus">TC_0470</name>
</gene>
<keyword id="KW-0012">Acyltransferase</keyword>
<keyword id="KW-0963">Cytoplasm</keyword>
<keyword id="KW-0408">Iron</keyword>
<keyword id="KW-0479">Metal-binding</keyword>
<keyword id="KW-0808">Transferase</keyword>
<keyword id="KW-0819">tRNA processing</keyword>
<proteinExistence type="inferred from homology"/>
<organism>
    <name type="scientific">Chlamydia muridarum (strain MoPn / Nigg)</name>
    <dbReference type="NCBI Taxonomy" id="243161"/>
    <lineage>
        <taxon>Bacteria</taxon>
        <taxon>Pseudomonadati</taxon>
        <taxon>Chlamydiota</taxon>
        <taxon>Chlamydiia</taxon>
        <taxon>Chlamydiales</taxon>
        <taxon>Chlamydiaceae</taxon>
        <taxon>Chlamydia/Chlamydophila group</taxon>
        <taxon>Chlamydia</taxon>
    </lineage>
</organism>
<protein>
    <recommendedName>
        <fullName evidence="1">tRNA N6-adenosine threonylcarbamoyltransferase</fullName>
        <ecNumber evidence="1">2.3.1.234</ecNumber>
    </recommendedName>
    <alternativeName>
        <fullName evidence="1">N6-L-threonylcarbamoyladenine synthase</fullName>
        <shortName evidence="1">t(6)A synthase</shortName>
    </alternativeName>
    <alternativeName>
        <fullName evidence="1">t(6)A37 threonylcarbamoyladenosine biosynthesis protein TsaD</fullName>
    </alternativeName>
    <alternativeName>
        <fullName evidence="1">tRNA threonylcarbamoyladenosine biosynthesis protein TsaD</fullName>
    </alternativeName>
</protein>
<reference key="1">
    <citation type="journal article" date="2000" name="Nucleic Acids Res.">
        <title>Genome sequences of Chlamydia trachomatis MoPn and Chlamydia pneumoniae AR39.</title>
        <authorList>
            <person name="Read T.D."/>
            <person name="Brunham R.C."/>
            <person name="Shen C."/>
            <person name="Gill S.R."/>
            <person name="Heidelberg J.F."/>
            <person name="White O."/>
            <person name="Hickey E.K."/>
            <person name="Peterson J.D."/>
            <person name="Utterback T.R."/>
            <person name="Berry K.J."/>
            <person name="Bass S."/>
            <person name="Linher K.D."/>
            <person name="Weidman J.F."/>
            <person name="Khouri H.M."/>
            <person name="Craven B."/>
            <person name="Bowman C."/>
            <person name="Dodson R.J."/>
            <person name="Gwinn M.L."/>
            <person name="Nelson W.C."/>
            <person name="DeBoy R.T."/>
            <person name="Kolonay J.F."/>
            <person name="McClarty G."/>
            <person name="Salzberg S.L."/>
            <person name="Eisen J.A."/>
            <person name="Fraser C.M."/>
        </authorList>
    </citation>
    <scope>NUCLEOTIDE SEQUENCE [LARGE SCALE GENOMIC DNA]</scope>
    <source>
        <strain>MoPn / Nigg</strain>
    </source>
</reference>
<feature type="chain" id="PRO_0000303315" description="tRNA N6-adenosine threonylcarbamoyltransferase">
    <location>
        <begin position="1"/>
        <end position="340"/>
    </location>
</feature>
<feature type="binding site" evidence="1">
    <location>
        <position position="109"/>
    </location>
    <ligand>
        <name>Fe cation</name>
        <dbReference type="ChEBI" id="CHEBI:24875"/>
    </ligand>
</feature>
<feature type="binding site" evidence="1">
    <location>
        <position position="113"/>
    </location>
    <ligand>
        <name>Fe cation</name>
        <dbReference type="ChEBI" id="CHEBI:24875"/>
    </ligand>
</feature>
<feature type="binding site" evidence="1">
    <location>
        <begin position="132"/>
        <end position="136"/>
    </location>
    <ligand>
        <name>substrate</name>
    </ligand>
</feature>
<feature type="binding site" evidence="1">
    <location>
        <position position="165"/>
    </location>
    <ligand>
        <name>substrate</name>
    </ligand>
</feature>
<feature type="binding site" evidence="1">
    <location>
        <position position="178"/>
    </location>
    <ligand>
        <name>substrate</name>
    </ligand>
</feature>
<feature type="binding site" evidence="1">
    <location>
        <position position="277"/>
    </location>
    <ligand>
        <name>substrate</name>
    </ligand>
</feature>
<feature type="binding site" evidence="1">
    <location>
        <position position="302"/>
    </location>
    <ligand>
        <name>Fe cation</name>
        <dbReference type="ChEBI" id="CHEBI:24875"/>
    </ligand>
</feature>
<accession>Q9PKJ5</accession>
<comment type="function">
    <text evidence="1">Required for the formation of a threonylcarbamoyl group on adenosine at position 37 (t(6)A37) in tRNAs that read codons beginning with adenine. Is involved in the transfer of the threonylcarbamoyl moiety of threonylcarbamoyl-AMP (TC-AMP) to the N6 group of A37, together with TsaE and TsaB. TsaD likely plays a direct catalytic role in this reaction.</text>
</comment>
<comment type="catalytic activity">
    <reaction evidence="1">
        <text>L-threonylcarbamoyladenylate + adenosine(37) in tRNA = N(6)-L-threonylcarbamoyladenosine(37) in tRNA + AMP + H(+)</text>
        <dbReference type="Rhea" id="RHEA:37059"/>
        <dbReference type="Rhea" id="RHEA-COMP:10162"/>
        <dbReference type="Rhea" id="RHEA-COMP:10163"/>
        <dbReference type="ChEBI" id="CHEBI:15378"/>
        <dbReference type="ChEBI" id="CHEBI:73682"/>
        <dbReference type="ChEBI" id="CHEBI:74411"/>
        <dbReference type="ChEBI" id="CHEBI:74418"/>
        <dbReference type="ChEBI" id="CHEBI:456215"/>
        <dbReference type="EC" id="2.3.1.234"/>
    </reaction>
</comment>
<comment type="cofactor">
    <cofactor evidence="1">
        <name>Fe(2+)</name>
        <dbReference type="ChEBI" id="CHEBI:29033"/>
    </cofactor>
    <text evidence="1">Binds 1 Fe(2+) ion per subunit.</text>
</comment>
<comment type="subcellular location">
    <subcellularLocation>
        <location evidence="1">Cytoplasm</location>
    </subcellularLocation>
</comment>
<comment type="similarity">
    <text evidence="1">Belongs to the KAE1 / TsaD family.</text>
</comment>
<evidence type="ECO:0000255" key="1">
    <source>
        <dbReference type="HAMAP-Rule" id="MF_01445"/>
    </source>
</evidence>
<dbReference type="EC" id="2.3.1.234" evidence="1"/>
<dbReference type="EMBL" id="AE002160">
    <property type="protein sequence ID" value="AAF73560.1"/>
    <property type="molecule type" value="Genomic_DNA"/>
</dbReference>
<dbReference type="RefSeq" id="WP_010230519.1">
    <property type="nucleotide sequence ID" value="NZ_CP063055.1"/>
</dbReference>
<dbReference type="SMR" id="Q9PKJ5"/>
<dbReference type="GeneID" id="1245825"/>
<dbReference type="KEGG" id="cmu:TC_0470"/>
<dbReference type="eggNOG" id="COG0533">
    <property type="taxonomic scope" value="Bacteria"/>
</dbReference>
<dbReference type="HOGENOM" id="CLU_023208_0_2_0"/>
<dbReference type="OrthoDB" id="9806197at2"/>
<dbReference type="Proteomes" id="UP000000800">
    <property type="component" value="Chromosome"/>
</dbReference>
<dbReference type="GO" id="GO:0005737">
    <property type="term" value="C:cytoplasm"/>
    <property type="evidence" value="ECO:0007669"/>
    <property type="project" value="UniProtKB-SubCell"/>
</dbReference>
<dbReference type="GO" id="GO:0005506">
    <property type="term" value="F:iron ion binding"/>
    <property type="evidence" value="ECO:0007669"/>
    <property type="project" value="UniProtKB-UniRule"/>
</dbReference>
<dbReference type="GO" id="GO:0061711">
    <property type="term" value="F:N(6)-L-threonylcarbamoyladenine synthase activity"/>
    <property type="evidence" value="ECO:0007669"/>
    <property type="project" value="UniProtKB-EC"/>
</dbReference>
<dbReference type="GO" id="GO:0002949">
    <property type="term" value="P:tRNA threonylcarbamoyladenosine modification"/>
    <property type="evidence" value="ECO:0007669"/>
    <property type="project" value="UniProtKB-UniRule"/>
</dbReference>
<dbReference type="FunFam" id="3.30.420.40:FF:000288">
    <property type="entry name" value="tRNA N6-adenosine threonylcarbamoyltransferase"/>
    <property type="match status" value="1"/>
</dbReference>
<dbReference type="Gene3D" id="3.30.420.40">
    <property type="match status" value="2"/>
</dbReference>
<dbReference type="HAMAP" id="MF_01445">
    <property type="entry name" value="TsaD"/>
    <property type="match status" value="1"/>
</dbReference>
<dbReference type="InterPro" id="IPR043129">
    <property type="entry name" value="ATPase_NBD"/>
</dbReference>
<dbReference type="InterPro" id="IPR000905">
    <property type="entry name" value="Gcp-like_dom"/>
</dbReference>
<dbReference type="InterPro" id="IPR017861">
    <property type="entry name" value="KAE1/TsaD"/>
</dbReference>
<dbReference type="InterPro" id="IPR022450">
    <property type="entry name" value="TsaD"/>
</dbReference>
<dbReference type="NCBIfam" id="TIGR00329">
    <property type="entry name" value="gcp_kae1"/>
    <property type="match status" value="1"/>
</dbReference>
<dbReference type="NCBIfam" id="TIGR03723">
    <property type="entry name" value="T6A_TsaD_YgjD"/>
    <property type="match status" value="1"/>
</dbReference>
<dbReference type="PANTHER" id="PTHR11735">
    <property type="entry name" value="TRNA N6-ADENOSINE THREONYLCARBAMOYLTRANSFERASE"/>
    <property type="match status" value="1"/>
</dbReference>
<dbReference type="PANTHER" id="PTHR11735:SF6">
    <property type="entry name" value="TRNA N6-ADENOSINE THREONYLCARBAMOYLTRANSFERASE, MITOCHONDRIAL"/>
    <property type="match status" value="1"/>
</dbReference>
<dbReference type="Pfam" id="PF00814">
    <property type="entry name" value="TsaD"/>
    <property type="match status" value="1"/>
</dbReference>
<dbReference type="PRINTS" id="PR00789">
    <property type="entry name" value="OSIALOPTASE"/>
</dbReference>
<dbReference type="SUPFAM" id="SSF53067">
    <property type="entry name" value="Actin-like ATPase domain"/>
    <property type="match status" value="1"/>
</dbReference>